<name>DER_CERSK</name>
<organism>
    <name type="scientific">Cereibacter sphaeroides (strain KD131 / KCTC 12085)</name>
    <name type="common">Rhodobacter sphaeroides</name>
    <dbReference type="NCBI Taxonomy" id="557760"/>
    <lineage>
        <taxon>Bacteria</taxon>
        <taxon>Pseudomonadati</taxon>
        <taxon>Pseudomonadota</taxon>
        <taxon>Alphaproteobacteria</taxon>
        <taxon>Rhodobacterales</taxon>
        <taxon>Paracoccaceae</taxon>
        <taxon>Cereibacter</taxon>
    </lineage>
</organism>
<keyword id="KW-0342">GTP-binding</keyword>
<keyword id="KW-0547">Nucleotide-binding</keyword>
<keyword id="KW-0677">Repeat</keyword>
<keyword id="KW-0690">Ribosome biogenesis</keyword>
<protein>
    <recommendedName>
        <fullName evidence="1">GTPase Der</fullName>
    </recommendedName>
    <alternativeName>
        <fullName evidence="1">GTP-binding protein EngA</fullName>
    </alternativeName>
</protein>
<dbReference type="EMBL" id="CP001150">
    <property type="protein sequence ID" value="ACM00874.1"/>
    <property type="molecule type" value="Genomic_DNA"/>
</dbReference>
<dbReference type="RefSeq" id="WP_002719849.1">
    <property type="nucleotide sequence ID" value="NC_011963.1"/>
</dbReference>
<dbReference type="SMR" id="B9KRT2"/>
<dbReference type="GeneID" id="67446448"/>
<dbReference type="KEGG" id="rsk:RSKD131_1014"/>
<dbReference type="HOGENOM" id="CLU_016077_5_0_5"/>
<dbReference type="GO" id="GO:0005525">
    <property type="term" value="F:GTP binding"/>
    <property type="evidence" value="ECO:0007669"/>
    <property type="project" value="UniProtKB-UniRule"/>
</dbReference>
<dbReference type="GO" id="GO:0042254">
    <property type="term" value="P:ribosome biogenesis"/>
    <property type="evidence" value="ECO:0007669"/>
    <property type="project" value="UniProtKB-KW"/>
</dbReference>
<dbReference type="CDD" id="cd01894">
    <property type="entry name" value="EngA1"/>
    <property type="match status" value="1"/>
</dbReference>
<dbReference type="CDD" id="cd01895">
    <property type="entry name" value="EngA2"/>
    <property type="match status" value="1"/>
</dbReference>
<dbReference type="FunFam" id="3.30.300.20:FF:000004">
    <property type="entry name" value="GTPase Der"/>
    <property type="match status" value="1"/>
</dbReference>
<dbReference type="Gene3D" id="3.30.300.20">
    <property type="match status" value="1"/>
</dbReference>
<dbReference type="Gene3D" id="3.40.50.300">
    <property type="entry name" value="P-loop containing nucleotide triphosphate hydrolases"/>
    <property type="match status" value="2"/>
</dbReference>
<dbReference type="HAMAP" id="MF_00195">
    <property type="entry name" value="GTPase_Der"/>
    <property type="match status" value="1"/>
</dbReference>
<dbReference type="InterPro" id="IPR031166">
    <property type="entry name" value="G_ENGA"/>
</dbReference>
<dbReference type="InterPro" id="IPR006073">
    <property type="entry name" value="GTP-bd"/>
</dbReference>
<dbReference type="InterPro" id="IPR016484">
    <property type="entry name" value="GTPase_Der"/>
</dbReference>
<dbReference type="InterPro" id="IPR032859">
    <property type="entry name" value="KH_dom-like"/>
</dbReference>
<dbReference type="InterPro" id="IPR015946">
    <property type="entry name" value="KH_dom-like_a/b"/>
</dbReference>
<dbReference type="InterPro" id="IPR027417">
    <property type="entry name" value="P-loop_NTPase"/>
</dbReference>
<dbReference type="InterPro" id="IPR005225">
    <property type="entry name" value="Small_GTP-bd"/>
</dbReference>
<dbReference type="NCBIfam" id="TIGR03594">
    <property type="entry name" value="GTPase_EngA"/>
    <property type="match status" value="1"/>
</dbReference>
<dbReference type="NCBIfam" id="TIGR00231">
    <property type="entry name" value="small_GTP"/>
    <property type="match status" value="2"/>
</dbReference>
<dbReference type="PANTHER" id="PTHR43834">
    <property type="entry name" value="GTPASE DER"/>
    <property type="match status" value="1"/>
</dbReference>
<dbReference type="PANTHER" id="PTHR43834:SF6">
    <property type="entry name" value="GTPASE DER"/>
    <property type="match status" value="1"/>
</dbReference>
<dbReference type="Pfam" id="PF14714">
    <property type="entry name" value="KH_dom-like"/>
    <property type="match status" value="1"/>
</dbReference>
<dbReference type="Pfam" id="PF01926">
    <property type="entry name" value="MMR_HSR1"/>
    <property type="match status" value="2"/>
</dbReference>
<dbReference type="PIRSF" id="PIRSF006485">
    <property type="entry name" value="GTP-binding_EngA"/>
    <property type="match status" value="1"/>
</dbReference>
<dbReference type="PRINTS" id="PR00326">
    <property type="entry name" value="GTP1OBG"/>
</dbReference>
<dbReference type="SUPFAM" id="SSF52540">
    <property type="entry name" value="P-loop containing nucleoside triphosphate hydrolases"/>
    <property type="match status" value="2"/>
</dbReference>
<dbReference type="PROSITE" id="PS51712">
    <property type="entry name" value="G_ENGA"/>
    <property type="match status" value="2"/>
</dbReference>
<accession>B9KRT2</accession>
<evidence type="ECO:0000255" key="1">
    <source>
        <dbReference type="HAMAP-Rule" id="MF_00195"/>
    </source>
</evidence>
<evidence type="ECO:0000256" key="2">
    <source>
        <dbReference type="SAM" id="MobiDB-lite"/>
    </source>
</evidence>
<feature type="chain" id="PRO_1000124368" description="GTPase Der">
    <location>
        <begin position="1"/>
        <end position="487"/>
    </location>
</feature>
<feature type="domain" description="EngA-type G 1">
    <location>
        <begin position="3"/>
        <end position="167"/>
    </location>
</feature>
<feature type="domain" description="EngA-type G 2">
    <location>
        <begin position="203"/>
        <end position="378"/>
    </location>
</feature>
<feature type="domain" description="KH-like" evidence="1">
    <location>
        <begin position="379"/>
        <end position="463"/>
    </location>
</feature>
<feature type="region of interest" description="Disordered" evidence="2">
    <location>
        <begin position="451"/>
        <end position="487"/>
    </location>
</feature>
<feature type="compositionally biased region" description="Basic residues" evidence="2">
    <location>
        <begin position="471"/>
        <end position="487"/>
    </location>
</feature>
<feature type="binding site" evidence="1">
    <location>
        <begin position="9"/>
        <end position="16"/>
    </location>
    <ligand>
        <name>GTP</name>
        <dbReference type="ChEBI" id="CHEBI:37565"/>
        <label>1</label>
    </ligand>
</feature>
<feature type="binding site" evidence="1">
    <location>
        <begin position="56"/>
        <end position="60"/>
    </location>
    <ligand>
        <name>GTP</name>
        <dbReference type="ChEBI" id="CHEBI:37565"/>
        <label>1</label>
    </ligand>
</feature>
<feature type="binding site" evidence="1">
    <location>
        <begin position="119"/>
        <end position="122"/>
    </location>
    <ligand>
        <name>GTP</name>
        <dbReference type="ChEBI" id="CHEBI:37565"/>
        <label>1</label>
    </ligand>
</feature>
<feature type="binding site" evidence="1">
    <location>
        <begin position="209"/>
        <end position="216"/>
    </location>
    <ligand>
        <name>GTP</name>
        <dbReference type="ChEBI" id="CHEBI:37565"/>
        <label>2</label>
    </ligand>
</feature>
<feature type="binding site" evidence="1">
    <location>
        <begin position="256"/>
        <end position="260"/>
    </location>
    <ligand>
        <name>GTP</name>
        <dbReference type="ChEBI" id="CHEBI:37565"/>
        <label>2</label>
    </ligand>
</feature>
<feature type="binding site" evidence="1">
    <location>
        <begin position="321"/>
        <end position="324"/>
    </location>
    <ligand>
        <name>GTP</name>
        <dbReference type="ChEBI" id="CHEBI:37565"/>
        <label>2</label>
    </ligand>
</feature>
<gene>
    <name evidence="1" type="primary">der</name>
    <name type="synonym">engA</name>
    <name type="ordered locus">RSKD131_1014</name>
</gene>
<comment type="function">
    <text evidence="1">GTPase that plays an essential role in the late steps of ribosome biogenesis.</text>
</comment>
<comment type="subunit">
    <text evidence="1">Associates with the 50S ribosomal subunit.</text>
</comment>
<comment type="similarity">
    <text evidence="1">Belongs to the TRAFAC class TrmE-Era-EngA-EngB-Septin-like GTPase superfamily. EngA (Der) GTPase family.</text>
</comment>
<reference key="1">
    <citation type="journal article" date="2009" name="J. Bacteriol.">
        <title>Complete genome sequence of Rhodobacter sphaeroides KD131.</title>
        <authorList>
            <person name="Lim S.-K."/>
            <person name="Kim S.J."/>
            <person name="Cha S.H."/>
            <person name="Oh Y.-K."/>
            <person name="Rhee H.-J."/>
            <person name="Kim M.-S."/>
            <person name="Lee J.K."/>
        </authorList>
    </citation>
    <scope>NUCLEOTIDE SEQUENCE [LARGE SCALE GENOMIC DNA]</scope>
    <source>
        <strain>KD131 / KCTC 12085</strain>
    </source>
</reference>
<sequence>MSFTLAIVGRPNVGKSTLFNRLVGKRLALVDDQPGVTRDLREGDARLIDLRFTVIDTAGLEEVTDDSLQGRMRRLTERAVEMADVCLFLIDGRVGVTPSDEVFADILRRKNAHVILGVNKAEGRAGDGGAIEAWSLGLGEPIRLSAEHGEGMDDLYHILRPIAEGFAERAAADAPVVDVDVPEEEADLEADPEAHKPTVKHPLQIAVIGRPNAGKSTLINKIIGEDRLLTGPEAGITRDAISVRSEWHGTPIRIFDTAGMRKKARISDKLEKLSVADGLRAVRFAEVVVVLLDVEIPFEQQDLRIADFAETEGRAVVVAVNKWDLEGEKQEKLAELKEMFERLLPQLRGAPLVTVSAKTGRGLDRLHAAILRAHDIWNRRITTARLNTWLGAMVEAHPPPAPGGRRIKLRYMTQVKTRPPGFVVMCSHPDEMPDSYRRYLVNGLRDHFDMPGTPIRLTMRGQGDKNPFKERKFRTPSRLRKHLGKKD</sequence>
<proteinExistence type="inferred from homology"/>